<feature type="initiator methionine" description="Removed; by host" evidence="1">
    <location>
        <position position="1"/>
    </location>
</feature>
<feature type="chain" id="PRO_0000088151" description="Tyrosine-protein kinase transforming protein Src">
    <location>
        <begin position="2"/>
        <end position="523"/>
    </location>
</feature>
<feature type="domain" description="SH3" evidence="4">
    <location>
        <begin position="71"/>
        <end position="139"/>
    </location>
</feature>
<feature type="domain" description="SH2" evidence="3">
    <location>
        <begin position="145"/>
        <end position="242"/>
    </location>
</feature>
<feature type="domain" description="Protein kinase" evidence="2">
    <location>
        <begin position="264"/>
        <end position="514"/>
    </location>
</feature>
<feature type="region of interest" description="Disordered" evidence="6">
    <location>
        <begin position="1"/>
        <end position="50"/>
    </location>
</feature>
<feature type="compositionally biased region" description="Basic and acidic residues" evidence="6">
    <location>
        <begin position="7"/>
        <end position="25"/>
    </location>
</feature>
<feature type="active site" description="Proton acceptor" evidence="2 5">
    <location>
        <position position="383"/>
    </location>
</feature>
<feature type="binding site" evidence="2">
    <location>
        <begin position="270"/>
        <end position="278"/>
    </location>
    <ligand>
        <name>ATP</name>
        <dbReference type="ChEBI" id="CHEBI:30616"/>
    </ligand>
</feature>
<feature type="binding site" evidence="2">
    <location>
        <position position="292"/>
    </location>
    <ligand>
        <name>ATP</name>
        <dbReference type="ChEBI" id="CHEBI:30616"/>
    </ligand>
</feature>
<feature type="modified residue" description="Phosphotyrosine; by autocatalysis" evidence="1">
    <location>
        <position position="413"/>
    </location>
</feature>
<feature type="lipid moiety-binding region" description="N-myristoyl glycine; by host" evidence="1">
    <location>
        <position position="2"/>
    </location>
</feature>
<keyword id="KW-0067">ATP-binding</keyword>
<keyword id="KW-0418">Kinase</keyword>
<keyword id="KW-0449">Lipoprotein</keyword>
<keyword id="KW-0519">Myristate</keyword>
<keyword id="KW-0547">Nucleotide-binding</keyword>
<keyword id="KW-0553">Oncogene</keyword>
<keyword id="KW-0597">Phosphoprotein</keyword>
<keyword id="KW-0727">SH2 domain</keyword>
<keyword id="KW-0728">SH3 domain</keyword>
<keyword id="KW-0808">Transferase</keyword>
<keyword id="KW-0829">Tyrosine-protein kinase</keyword>
<dbReference type="EC" id="2.7.10.2"/>
<dbReference type="EMBL" id="M84475">
    <property type="protein sequence ID" value="AAA42581.1"/>
    <property type="status" value="ALT_SEQ"/>
    <property type="molecule type" value="Genomic_DNA"/>
</dbReference>
<dbReference type="PIR" id="A42994">
    <property type="entry name" value="TVFVMT"/>
</dbReference>
<dbReference type="SMR" id="P31693"/>
<dbReference type="BRENDA" id="2.7.10.2">
    <property type="organism ID" value="5464"/>
</dbReference>
<dbReference type="GO" id="GO:0005524">
    <property type="term" value="F:ATP binding"/>
    <property type="evidence" value="ECO:0007669"/>
    <property type="project" value="UniProtKB-KW"/>
</dbReference>
<dbReference type="GO" id="GO:0004715">
    <property type="term" value="F:non-membrane spanning protein tyrosine kinase activity"/>
    <property type="evidence" value="ECO:0007669"/>
    <property type="project" value="UniProtKB-EC"/>
</dbReference>
<dbReference type="CDD" id="cd10365">
    <property type="entry name" value="SH2_Src_Src"/>
    <property type="match status" value="1"/>
</dbReference>
<dbReference type="FunFam" id="1.10.510.10:FF:000553">
    <property type="entry name" value="Tyrosine-protein kinase"/>
    <property type="match status" value="1"/>
</dbReference>
<dbReference type="FunFam" id="3.30.200.20:FF:000016">
    <property type="entry name" value="Tyrosine-protein kinase"/>
    <property type="match status" value="1"/>
</dbReference>
<dbReference type="FunFam" id="3.30.505.10:FF:000001">
    <property type="entry name" value="Tyrosine-protein kinase"/>
    <property type="match status" value="1"/>
</dbReference>
<dbReference type="Gene3D" id="3.30.200.20">
    <property type="entry name" value="Phosphorylase Kinase, domain 1"/>
    <property type="match status" value="1"/>
</dbReference>
<dbReference type="Gene3D" id="3.30.505.10">
    <property type="entry name" value="SH2 domain"/>
    <property type="match status" value="1"/>
</dbReference>
<dbReference type="Gene3D" id="2.30.30.40">
    <property type="entry name" value="SH3 Domains"/>
    <property type="match status" value="1"/>
</dbReference>
<dbReference type="Gene3D" id="1.10.510.10">
    <property type="entry name" value="Transferase(Phosphotransferase) domain 1"/>
    <property type="match status" value="1"/>
</dbReference>
<dbReference type="InterPro" id="IPR011009">
    <property type="entry name" value="Kinase-like_dom_sf"/>
</dbReference>
<dbReference type="InterPro" id="IPR050198">
    <property type="entry name" value="Non-receptor_tyrosine_kinases"/>
</dbReference>
<dbReference type="InterPro" id="IPR000719">
    <property type="entry name" value="Prot_kinase_dom"/>
</dbReference>
<dbReference type="InterPro" id="IPR017441">
    <property type="entry name" value="Protein_kinase_ATP_BS"/>
</dbReference>
<dbReference type="InterPro" id="IPR001245">
    <property type="entry name" value="Ser-Thr/Tyr_kinase_cat_dom"/>
</dbReference>
<dbReference type="InterPro" id="IPR000980">
    <property type="entry name" value="SH2"/>
</dbReference>
<dbReference type="InterPro" id="IPR036860">
    <property type="entry name" value="SH2_dom_sf"/>
</dbReference>
<dbReference type="InterPro" id="IPR036028">
    <property type="entry name" value="SH3-like_dom_sf"/>
</dbReference>
<dbReference type="InterPro" id="IPR001452">
    <property type="entry name" value="SH3_domain"/>
</dbReference>
<dbReference type="InterPro" id="IPR008266">
    <property type="entry name" value="Tyr_kinase_AS"/>
</dbReference>
<dbReference type="InterPro" id="IPR020635">
    <property type="entry name" value="Tyr_kinase_cat_dom"/>
</dbReference>
<dbReference type="PANTHER" id="PTHR24418">
    <property type="entry name" value="TYROSINE-PROTEIN KINASE"/>
    <property type="match status" value="1"/>
</dbReference>
<dbReference type="Pfam" id="PF07714">
    <property type="entry name" value="PK_Tyr_Ser-Thr"/>
    <property type="match status" value="1"/>
</dbReference>
<dbReference type="Pfam" id="PF00017">
    <property type="entry name" value="SH2"/>
    <property type="match status" value="1"/>
</dbReference>
<dbReference type="Pfam" id="PF00018">
    <property type="entry name" value="SH3_1"/>
    <property type="match status" value="1"/>
</dbReference>
<dbReference type="PRINTS" id="PR00401">
    <property type="entry name" value="SH2DOMAIN"/>
</dbReference>
<dbReference type="PRINTS" id="PR00452">
    <property type="entry name" value="SH3DOMAIN"/>
</dbReference>
<dbReference type="PRINTS" id="PR00109">
    <property type="entry name" value="TYRKINASE"/>
</dbReference>
<dbReference type="SMART" id="SM00252">
    <property type="entry name" value="SH2"/>
    <property type="match status" value="1"/>
</dbReference>
<dbReference type="SMART" id="SM00326">
    <property type="entry name" value="SH3"/>
    <property type="match status" value="1"/>
</dbReference>
<dbReference type="SMART" id="SM00219">
    <property type="entry name" value="TyrKc"/>
    <property type="match status" value="1"/>
</dbReference>
<dbReference type="SUPFAM" id="SSF56112">
    <property type="entry name" value="Protein kinase-like (PK-like)"/>
    <property type="match status" value="1"/>
</dbReference>
<dbReference type="SUPFAM" id="SSF55550">
    <property type="entry name" value="SH2 domain"/>
    <property type="match status" value="1"/>
</dbReference>
<dbReference type="SUPFAM" id="SSF50044">
    <property type="entry name" value="SH3-domain"/>
    <property type="match status" value="1"/>
</dbReference>
<dbReference type="PROSITE" id="PS00107">
    <property type="entry name" value="PROTEIN_KINASE_ATP"/>
    <property type="match status" value="1"/>
</dbReference>
<dbReference type="PROSITE" id="PS50011">
    <property type="entry name" value="PROTEIN_KINASE_DOM"/>
    <property type="match status" value="1"/>
</dbReference>
<dbReference type="PROSITE" id="PS00109">
    <property type="entry name" value="PROTEIN_KINASE_TYR"/>
    <property type="match status" value="1"/>
</dbReference>
<dbReference type="PROSITE" id="PS50001">
    <property type="entry name" value="SH2"/>
    <property type="match status" value="1"/>
</dbReference>
<dbReference type="PROSITE" id="PS50002">
    <property type="entry name" value="SH3"/>
    <property type="match status" value="1"/>
</dbReference>
<protein>
    <recommendedName>
        <fullName>Tyrosine-protein kinase transforming protein Src</fullName>
        <ecNumber>2.7.10.2</ecNumber>
    </recommendedName>
    <alternativeName>
        <fullName>pp60v-src</fullName>
        <shortName>p60-Src</shortName>
        <shortName>v-Src</shortName>
    </alternativeName>
</protein>
<reference key="1">
    <citation type="journal article" date="1992" name="Virology">
        <title>Small deletion in v-src SH3 domain of a transformation defective mutant of Rous sarcoma virus restores wild type transforming properties.</title>
        <authorList>
            <person name="Dezelee P."/>
            <person name="Barnier J.V."/>
            <person name="Hampe A."/>
            <person name="Laugier D."/>
            <person name="Marx M."/>
            <person name="Galibert F."/>
            <person name="Calothy G."/>
        </authorList>
    </citation>
    <scope>NUCLEOTIDE SEQUENCE [GENOMIC DNA]</scope>
</reference>
<proteinExistence type="inferred from homology"/>
<accession>P31693</accession>
<sequence>MGSSKSKPKDPSQRRRSLEPPDSTHHGGFPASQTPNKTAAPDTHRTPSRSFGTVATELKLFGDFNTSDTVTSPQRAGALAGSVTTFGTRESRIETDLSFKKRERLQIVNNTEGTWWLAHSLTTGQTGYIPSNYVAPSDSIQAEEWYFGKITRRESGRLLLNPENPRGTFLVRESETTKGAYCLSVSDFDNAKGLNVKHYKIRKLDSGGFYITSRTQFSSLQQLVAYYSKHADGLCHRLTNVCPTSKPQTQGLAKDAWEIPRESLRLEVKLGQGYFGEVWMGTWNGTTRVAIKTLKPGTMSPEAFLQEAQVMKKLRHEKLVQLYAMVSEEPIYIVIEYMSKGSLLDFLKGEMGKYLRLPQLVEMAAQIASGMAYVERMNYVHRDLRAANILVGENLVCKVADFGLARLIEDNEYTARPGARFPVKWTAPEAALYGRFTIKSDVWSFGILLTELTTKGRVPYPGMVNGEVLDRVERGYRMPCPPECPESLHDLMCQCWRKDPEERPTFEYLQAQLLPACVLKIAE</sequence>
<comment type="function">
    <text>This phosphoprotein, required for both the initiation and the maintenance of neoplastic transformation, is a protein kinase that catalyzes the phosphorylation of tyrosine residues in vitro.</text>
</comment>
<comment type="catalytic activity">
    <reaction evidence="5">
        <text>L-tyrosyl-[protein] + ATP = O-phospho-L-tyrosyl-[protein] + ADP + H(+)</text>
        <dbReference type="Rhea" id="RHEA:10596"/>
        <dbReference type="Rhea" id="RHEA-COMP:10136"/>
        <dbReference type="Rhea" id="RHEA-COMP:20101"/>
        <dbReference type="ChEBI" id="CHEBI:15378"/>
        <dbReference type="ChEBI" id="CHEBI:30616"/>
        <dbReference type="ChEBI" id="CHEBI:46858"/>
        <dbReference type="ChEBI" id="CHEBI:61978"/>
        <dbReference type="ChEBI" id="CHEBI:456216"/>
        <dbReference type="EC" id="2.7.10.2"/>
    </reaction>
</comment>
<comment type="subunit">
    <text evidence="1">Homodimer.</text>
</comment>
<comment type="PTM">
    <text>The phosphorylated form is termed pp60v-src.</text>
</comment>
<comment type="similarity">
    <text evidence="2">Belongs to the protein kinase superfamily. Tyr protein kinase family. SRC subfamily.</text>
</comment>
<gene>
    <name type="primary">V-SRC</name>
</gene>
<organismHost>
    <name type="scientific">Gallus gallus</name>
    <name type="common">Chicken</name>
    <dbReference type="NCBI Taxonomy" id="9031"/>
</organismHost>
<evidence type="ECO:0000250" key="1"/>
<evidence type="ECO:0000255" key="2">
    <source>
        <dbReference type="PROSITE-ProRule" id="PRU00159"/>
    </source>
</evidence>
<evidence type="ECO:0000255" key="3">
    <source>
        <dbReference type="PROSITE-ProRule" id="PRU00191"/>
    </source>
</evidence>
<evidence type="ECO:0000255" key="4">
    <source>
        <dbReference type="PROSITE-ProRule" id="PRU00192"/>
    </source>
</evidence>
<evidence type="ECO:0000255" key="5">
    <source>
        <dbReference type="PROSITE-ProRule" id="PRU10028"/>
    </source>
</evidence>
<evidence type="ECO:0000256" key="6">
    <source>
        <dbReference type="SAM" id="MobiDB-lite"/>
    </source>
</evidence>
<name>SRC_RSVPA</name>
<organism>
    <name type="scientific">Rous sarcoma virus (strain PA101T)</name>
    <dbReference type="NCBI Taxonomy" id="31667"/>
    <lineage>
        <taxon>Viruses</taxon>
        <taxon>Riboviria</taxon>
        <taxon>Pararnavirae</taxon>
        <taxon>Artverviricota</taxon>
        <taxon>Revtraviricetes</taxon>
        <taxon>Ortervirales</taxon>
        <taxon>Retroviridae</taxon>
        <taxon>Orthoretrovirinae</taxon>
        <taxon>Alpharetrovirus</taxon>
        <taxon>Rous sarcoma virus</taxon>
    </lineage>
</organism>